<name>MURA_MARN8</name>
<gene>
    <name evidence="1" type="primary">murA</name>
    <name type="ordered locus">Maqu_2703</name>
</gene>
<feature type="chain" id="PRO_1000023053" description="UDP-N-acetylglucosamine 1-carboxyvinyltransferase">
    <location>
        <begin position="1"/>
        <end position="420"/>
    </location>
</feature>
<feature type="active site" description="Proton donor" evidence="1">
    <location>
        <position position="117"/>
    </location>
</feature>
<feature type="binding site" evidence="1">
    <location>
        <begin position="22"/>
        <end position="23"/>
    </location>
    <ligand>
        <name>phosphoenolpyruvate</name>
        <dbReference type="ChEBI" id="CHEBI:58702"/>
    </ligand>
</feature>
<feature type="binding site" evidence="1">
    <location>
        <position position="93"/>
    </location>
    <ligand>
        <name>UDP-N-acetyl-alpha-D-glucosamine</name>
        <dbReference type="ChEBI" id="CHEBI:57705"/>
    </ligand>
</feature>
<feature type="binding site" evidence="1">
    <location>
        <position position="307"/>
    </location>
    <ligand>
        <name>UDP-N-acetyl-alpha-D-glucosamine</name>
        <dbReference type="ChEBI" id="CHEBI:57705"/>
    </ligand>
</feature>
<feature type="binding site" evidence="1">
    <location>
        <position position="329"/>
    </location>
    <ligand>
        <name>UDP-N-acetyl-alpha-D-glucosamine</name>
        <dbReference type="ChEBI" id="CHEBI:57705"/>
    </ligand>
</feature>
<feature type="modified residue" description="2-(S-cysteinyl)pyruvic acid O-phosphothioketal" evidence="1">
    <location>
        <position position="117"/>
    </location>
</feature>
<comment type="function">
    <text evidence="1">Cell wall formation. Adds enolpyruvyl to UDP-N-acetylglucosamine.</text>
</comment>
<comment type="catalytic activity">
    <reaction evidence="1">
        <text>phosphoenolpyruvate + UDP-N-acetyl-alpha-D-glucosamine = UDP-N-acetyl-3-O-(1-carboxyvinyl)-alpha-D-glucosamine + phosphate</text>
        <dbReference type="Rhea" id="RHEA:18681"/>
        <dbReference type="ChEBI" id="CHEBI:43474"/>
        <dbReference type="ChEBI" id="CHEBI:57705"/>
        <dbReference type="ChEBI" id="CHEBI:58702"/>
        <dbReference type="ChEBI" id="CHEBI:68483"/>
        <dbReference type="EC" id="2.5.1.7"/>
    </reaction>
</comment>
<comment type="pathway">
    <text evidence="1">Cell wall biogenesis; peptidoglycan biosynthesis.</text>
</comment>
<comment type="subcellular location">
    <subcellularLocation>
        <location evidence="1">Cytoplasm</location>
    </subcellularLocation>
</comment>
<comment type="similarity">
    <text evidence="1">Belongs to the EPSP synthase family. MurA subfamily.</text>
</comment>
<proteinExistence type="inferred from homology"/>
<accession>A1U459</accession>
<protein>
    <recommendedName>
        <fullName evidence="1">UDP-N-acetylglucosamine 1-carboxyvinyltransferase</fullName>
        <ecNumber evidence="1">2.5.1.7</ecNumber>
    </recommendedName>
    <alternativeName>
        <fullName evidence="1">Enoylpyruvate transferase</fullName>
    </alternativeName>
    <alternativeName>
        <fullName evidence="1">UDP-N-acetylglucosamine enolpyruvyl transferase</fullName>
        <shortName evidence="1">EPT</shortName>
    </alternativeName>
</protein>
<dbReference type="EC" id="2.5.1.7" evidence="1"/>
<dbReference type="EMBL" id="CP000514">
    <property type="protein sequence ID" value="ABM19778.1"/>
    <property type="molecule type" value="Genomic_DNA"/>
</dbReference>
<dbReference type="RefSeq" id="WP_011786148.1">
    <property type="nucleotide sequence ID" value="NC_008740.1"/>
</dbReference>
<dbReference type="SMR" id="A1U459"/>
<dbReference type="STRING" id="351348.Maqu_2703"/>
<dbReference type="GeneID" id="31821978"/>
<dbReference type="KEGG" id="maq:Maqu_2703"/>
<dbReference type="eggNOG" id="COG0766">
    <property type="taxonomic scope" value="Bacteria"/>
</dbReference>
<dbReference type="HOGENOM" id="CLU_027387_0_0_6"/>
<dbReference type="OrthoDB" id="9803760at2"/>
<dbReference type="UniPathway" id="UPA00219"/>
<dbReference type="Proteomes" id="UP000000998">
    <property type="component" value="Chromosome"/>
</dbReference>
<dbReference type="GO" id="GO:0005737">
    <property type="term" value="C:cytoplasm"/>
    <property type="evidence" value="ECO:0007669"/>
    <property type="project" value="UniProtKB-SubCell"/>
</dbReference>
<dbReference type="GO" id="GO:0008760">
    <property type="term" value="F:UDP-N-acetylglucosamine 1-carboxyvinyltransferase activity"/>
    <property type="evidence" value="ECO:0007669"/>
    <property type="project" value="UniProtKB-UniRule"/>
</dbReference>
<dbReference type="GO" id="GO:0051301">
    <property type="term" value="P:cell division"/>
    <property type="evidence" value="ECO:0007669"/>
    <property type="project" value="UniProtKB-KW"/>
</dbReference>
<dbReference type="GO" id="GO:0071555">
    <property type="term" value="P:cell wall organization"/>
    <property type="evidence" value="ECO:0007669"/>
    <property type="project" value="UniProtKB-KW"/>
</dbReference>
<dbReference type="GO" id="GO:0009252">
    <property type="term" value="P:peptidoglycan biosynthetic process"/>
    <property type="evidence" value="ECO:0007669"/>
    <property type="project" value="UniProtKB-UniRule"/>
</dbReference>
<dbReference type="GO" id="GO:0008360">
    <property type="term" value="P:regulation of cell shape"/>
    <property type="evidence" value="ECO:0007669"/>
    <property type="project" value="UniProtKB-KW"/>
</dbReference>
<dbReference type="GO" id="GO:0019277">
    <property type="term" value="P:UDP-N-acetylgalactosamine biosynthetic process"/>
    <property type="evidence" value="ECO:0007669"/>
    <property type="project" value="InterPro"/>
</dbReference>
<dbReference type="CDD" id="cd01555">
    <property type="entry name" value="UdpNAET"/>
    <property type="match status" value="1"/>
</dbReference>
<dbReference type="FunFam" id="3.65.10.10:FF:000002">
    <property type="entry name" value="UDP-N-acetylglucosamine 1-carboxyvinyltransferase"/>
    <property type="match status" value="1"/>
</dbReference>
<dbReference type="Gene3D" id="3.65.10.10">
    <property type="entry name" value="Enolpyruvate transferase domain"/>
    <property type="match status" value="2"/>
</dbReference>
<dbReference type="HAMAP" id="MF_00111">
    <property type="entry name" value="MurA"/>
    <property type="match status" value="1"/>
</dbReference>
<dbReference type="InterPro" id="IPR001986">
    <property type="entry name" value="Enolpyruvate_Tfrase_dom"/>
</dbReference>
<dbReference type="InterPro" id="IPR036968">
    <property type="entry name" value="Enolpyruvate_Tfrase_sf"/>
</dbReference>
<dbReference type="InterPro" id="IPR050068">
    <property type="entry name" value="MurA_subfamily"/>
</dbReference>
<dbReference type="InterPro" id="IPR013792">
    <property type="entry name" value="RNA3'P_cycl/enolpyr_Trfase_a/b"/>
</dbReference>
<dbReference type="InterPro" id="IPR005750">
    <property type="entry name" value="UDP_GlcNAc_COvinyl_MurA"/>
</dbReference>
<dbReference type="NCBIfam" id="TIGR01072">
    <property type="entry name" value="murA"/>
    <property type="match status" value="1"/>
</dbReference>
<dbReference type="NCBIfam" id="NF006873">
    <property type="entry name" value="PRK09369.1"/>
    <property type="match status" value="1"/>
</dbReference>
<dbReference type="PANTHER" id="PTHR43783">
    <property type="entry name" value="UDP-N-ACETYLGLUCOSAMINE 1-CARBOXYVINYLTRANSFERASE"/>
    <property type="match status" value="1"/>
</dbReference>
<dbReference type="PANTHER" id="PTHR43783:SF1">
    <property type="entry name" value="UDP-N-ACETYLGLUCOSAMINE 1-CARBOXYVINYLTRANSFERASE"/>
    <property type="match status" value="1"/>
</dbReference>
<dbReference type="Pfam" id="PF00275">
    <property type="entry name" value="EPSP_synthase"/>
    <property type="match status" value="1"/>
</dbReference>
<dbReference type="SUPFAM" id="SSF55205">
    <property type="entry name" value="EPT/RTPC-like"/>
    <property type="match status" value="1"/>
</dbReference>
<keyword id="KW-0131">Cell cycle</keyword>
<keyword id="KW-0132">Cell division</keyword>
<keyword id="KW-0133">Cell shape</keyword>
<keyword id="KW-0961">Cell wall biogenesis/degradation</keyword>
<keyword id="KW-0963">Cytoplasm</keyword>
<keyword id="KW-0573">Peptidoglycan synthesis</keyword>
<keyword id="KW-0670">Pyruvate</keyword>
<keyword id="KW-0808">Transferase</keyword>
<sequence length="420" mass="45094">MDKLLIRGRKPLDGEIRISGAKNAALPILAATLLADEPVTVGNLPHLNDITTMIELLGRMGVELLIDEKMSVEVHANTIKHFHAPYELVKTMRASILVLGPLVAHFGEAEVSLPGGCAIGTRPVNLHIHGLEMMGADIKVENGYIKAKTNGRLKGAHIFLDTVTVTGTENLMMAAALAEGKTILENAAREPEVVDLAECLIAMGADIKGHGTATIEINGVERLHGCHYNVLPDRIETGTYLVAAAATGGRVKVKDTREDILEAVLLKLEEAGAHITTGPDWIELDMKGKRPKAVSLRTAPYPAFPTDMQAQFAAMNAVAEGSGTIVETVFENRFMHLQELIRMGADITLEGNAAIIKGVEHLTGAPVMATDLRASASLVIAGLMADGDTIVDRIYHIDRGYECIEEKLQLLGASIRRLPA</sequence>
<organism>
    <name type="scientific">Marinobacter nauticus (strain ATCC 700491 / DSM 11845 / VT8)</name>
    <name type="common">Marinobacter aquaeolei</name>
    <dbReference type="NCBI Taxonomy" id="351348"/>
    <lineage>
        <taxon>Bacteria</taxon>
        <taxon>Pseudomonadati</taxon>
        <taxon>Pseudomonadota</taxon>
        <taxon>Gammaproteobacteria</taxon>
        <taxon>Pseudomonadales</taxon>
        <taxon>Marinobacteraceae</taxon>
        <taxon>Marinobacter</taxon>
    </lineage>
</organism>
<evidence type="ECO:0000255" key="1">
    <source>
        <dbReference type="HAMAP-Rule" id="MF_00111"/>
    </source>
</evidence>
<reference key="1">
    <citation type="journal article" date="2011" name="Appl. Environ. Microbiol.">
        <title>Genomic potential of Marinobacter aquaeolei, a biogeochemical 'opportunitroph'.</title>
        <authorList>
            <person name="Singer E."/>
            <person name="Webb E.A."/>
            <person name="Nelson W.C."/>
            <person name="Heidelberg J.F."/>
            <person name="Ivanova N."/>
            <person name="Pati A."/>
            <person name="Edwards K.J."/>
        </authorList>
    </citation>
    <scope>NUCLEOTIDE SEQUENCE [LARGE SCALE GENOMIC DNA]</scope>
    <source>
        <strain>ATCC 700491 / DSM 11845 / VT8</strain>
    </source>
</reference>